<organism>
    <name type="scientific">Helicoverpa armigera</name>
    <name type="common">Cotton bollworm</name>
    <name type="synonym">Heliothis armigera</name>
    <dbReference type="NCBI Taxonomy" id="29058"/>
    <lineage>
        <taxon>Eukaryota</taxon>
        <taxon>Metazoa</taxon>
        <taxon>Ecdysozoa</taxon>
        <taxon>Arthropoda</taxon>
        <taxon>Hexapoda</taxon>
        <taxon>Insecta</taxon>
        <taxon>Pterygota</taxon>
        <taxon>Neoptera</taxon>
        <taxon>Endopterygota</taxon>
        <taxon>Lepidoptera</taxon>
        <taxon>Glossata</taxon>
        <taxon>Ditrysia</taxon>
        <taxon>Noctuoidea</taxon>
        <taxon>Noctuidae</taxon>
        <taxon>Heliothinae</taxon>
        <taxon>Helicoverpa</taxon>
    </lineage>
</organism>
<comment type="function">
    <text evidence="2">Acts as a receptor for B.thuringiensis Cry1Ac delta-endotoxin.</text>
</comment>
<comment type="catalytic activity">
    <reaction evidence="2">
        <text>Release of an N-terminal amino acid, Xaa-|-Yaa- from a peptide, amide or arylamide. Xaa is preferably Ala, but may be most amino acids including Pro (slow action). When a terminal hydrophobic residue is followed by a prolyl residue, the two may be released as an intact Xaa-Pro dipeptide.</text>
        <dbReference type="EC" id="3.4.11.2"/>
    </reaction>
</comment>
<comment type="cofactor">
    <cofactor evidence="1">
        <name>Zn(2+)</name>
        <dbReference type="ChEBI" id="CHEBI:29105"/>
    </cofactor>
    <text evidence="1">Binds 1 zinc ion per subunit.</text>
</comment>
<comment type="activity regulation">
    <text evidence="2">Inhibited by the zinc-chelators 2,2-dipyridyl and 1,10-phenanthroline.</text>
</comment>
<comment type="similarity">
    <text evidence="3">Belongs to the peptidase M1 family.</text>
</comment>
<proteinExistence type="evidence at protein level"/>
<name>AMPN_HELAM</name>
<sequence length="10" mass="1093">GMYTHEGSDP</sequence>
<keyword id="KW-0031">Aminopeptidase</keyword>
<keyword id="KW-0903">Direct protein sequencing</keyword>
<keyword id="KW-0378">Hydrolase</keyword>
<keyword id="KW-0482">Metalloprotease</keyword>
<keyword id="KW-0645">Protease</keyword>
<keyword id="KW-0862">Zinc</keyword>
<evidence type="ECO:0000250" key="1"/>
<evidence type="ECO:0000269" key="2">
    <source>
    </source>
</evidence>
<evidence type="ECO:0000305" key="3"/>
<dbReference type="EC" id="3.4.11.2"/>
<dbReference type="GO" id="GO:0016285">
    <property type="term" value="F:alanyl aminopeptidase activity"/>
    <property type="evidence" value="ECO:0007669"/>
    <property type="project" value="UniProtKB-EC"/>
</dbReference>
<dbReference type="GO" id="GO:0008237">
    <property type="term" value="F:metallopeptidase activity"/>
    <property type="evidence" value="ECO:0007669"/>
    <property type="project" value="UniProtKB-KW"/>
</dbReference>
<dbReference type="GO" id="GO:0006508">
    <property type="term" value="P:proteolysis"/>
    <property type="evidence" value="ECO:0007669"/>
    <property type="project" value="UniProtKB-KW"/>
</dbReference>
<accession>P81731</accession>
<protein>
    <recommendedName>
        <fullName>Aminopeptidase N</fullName>
        <shortName>AP-N</shortName>
        <ecNumber>3.4.11.2</ecNumber>
    </recommendedName>
    <alternativeName>
        <fullName>CryIA(C) receptor</fullName>
    </alternativeName>
</protein>
<reference key="1">
    <citation type="journal article" date="2001" name="Curr. Microbiol.">
        <title>Aminopeptidase-N from the Helicoverpa armigera (Hubner) brush border membrane vesicles as a receptor of Bacillus thuringiensis crylac delta-endotoxin.</title>
        <authorList>
            <person name="Ingle S.S."/>
            <person name="Trivedi N."/>
            <person name="Prasad R."/>
            <person name="Kuruvilla J."/>
            <person name="Rao K.K."/>
            <person name="Chhatpar H.S."/>
        </authorList>
    </citation>
    <scope>PROTEIN SEQUENCE</scope>
    <scope>FUNCTION</scope>
    <scope>CATALYTIC ACTIVITY</scope>
    <scope>ACTIVITY REGULATION</scope>
    <source>
        <tissue>Larval midgut</tissue>
    </source>
</reference>
<feature type="chain" id="PRO_0000095086" description="Aminopeptidase N">
    <location>
        <begin position="1"/>
        <end position="10" status="greater than"/>
    </location>
</feature>
<feature type="non-terminal residue">
    <location>
        <position position="10"/>
    </location>
</feature>